<sequence>MKGQETRGFQSEVKQLLHLMIHSLYSNKEIFLRELISNASDAADKLRFRALSNPDLYEGDGELRVRVSFDKDKRTLTIADNGVGMNRDEVIDHLGTIAKSGTKSFLESMGSDQAKDSQLIGQFGVGFYSAFIVADKVTVRTRAAGDKPENGVFWESAGEGEYTVADITKNDRGTEITLHLREGEDEFLDDWRVRSIISKYSDHIALPVEIEKREEKDGETVISWEKINKAQALWTRNKSEIKDDEYNEFYKHIAHDFTDPLTWSHNRVEGKQEYTSLLYIPSQAPWDLWNRDHKHGLKLYVQRVFIMDDAEQFMPNYLRFVRGLIDSNDLPLNVSREILQDSTVTRNLRSALTKRVLQMLEKLAKDDAEKYQTFWKQFGLVLKEGPAEDHANQEAIAKLLRFASTHTDSSAQTVSLEDYVSRMKEGQEKIYYITADSYAAAKNSPHLELLRKKGIEVLLLSDRIDEWMMNYLTEFDGKAFQSVAKADESIEKLADEVDENAKEAEKALEPFVERVKTLLGDRVKDVRLTHRLTDTPAIVTTDADEMSTQMAKLFAAAGQSVPEVKYIFELNPDHVLVKRTADTKDEAQFKEWVELLLDQALFAERGTLEDPNQFIRRMNQLLVS</sequence>
<comment type="function">
    <text evidence="1">Molecular chaperone. Has ATPase activity.</text>
</comment>
<comment type="activity regulation">
    <text evidence="2">UMPylation of the chaperone by YdiU negatively regulates its activity, facilitating Salmonella survival under ATP-limited conditions.</text>
</comment>
<comment type="subunit">
    <text evidence="1">Homodimer.</text>
</comment>
<comment type="subcellular location">
    <subcellularLocation>
        <location evidence="1">Cytoplasm</location>
    </subcellularLocation>
</comment>
<comment type="PTM">
    <text evidence="2">UMPylated on a histidine residue by YdiU under ATP-limited conditions.</text>
</comment>
<comment type="similarity">
    <text evidence="1">Belongs to the heat shock protein 90 family.</text>
</comment>
<comment type="sequence caution" evidence="3">
    <conflict type="erroneous initiation">
        <sequence resource="EMBL-CDS" id="AAL19441"/>
    </conflict>
</comment>
<keyword id="KW-0067">ATP-binding</keyword>
<keyword id="KW-0143">Chaperone</keyword>
<keyword id="KW-0963">Cytoplasm</keyword>
<keyword id="KW-0547">Nucleotide-binding</keyword>
<keyword id="KW-1185">Reference proteome</keyword>
<keyword id="KW-0346">Stress response</keyword>
<dbReference type="EMBL" id="AE006468">
    <property type="protein sequence ID" value="AAL19441.1"/>
    <property type="status" value="ALT_INIT"/>
    <property type="molecule type" value="Genomic_DNA"/>
</dbReference>
<dbReference type="RefSeq" id="NP_459482.3">
    <property type="nucleotide sequence ID" value="NC_003197.2"/>
</dbReference>
<dbReference type="RefSeq" id="WP_001196740.1">
    <property type="nucleotide sequence ID" value="NC_003197.2"/>
</dbReference>
<dbReference type="SMR" id="P58480"/>
<dbReference type="STRING" id="99287.STM0487"/>
<dbReference type="PaxDb" id="99287-STM0487"/>
<dbReference type="GeneID" id="1252007"/>
<dbReference type="KEGG" id="stm:STM0487"/>
<dbReference type="PATRIC" id="fig|99287.12.peg.520"/>
<dbReference type="HOGENOM" id="CLU_006684_3_0_6"/>
<dbReference type="PhylomeDB" id="P58480"/>
<dbReference type="Proteomes" id="UP000001014">
    <property type="component" value="Chromosome"/>
</dbReference>
<dbReference type="GO" id="GO:0005829">
    <property type="term" value="C:cytosol"/>
    <property type="evidence" value="ECO:0000318"/>
    <property type="project" value="GO_Central"/>
</dbReference>
<dbReference type="GO" id="GO:0005524">
    <property type="term" value="F:ATP binding"/>
    <property type="evidence" value="ECO:0000318"/>
    <property type="project" value="GO_Central"/>
</dbReference>
<dbReference type="GO" id="GO:0016887">
    <property type="term" value="F:ATP hydrolysis activity"/>
    <property type="evidence" value="ECO:0000318"/>
    <property type="project" value="GO_Central"/>
</dbReference>
<dbReference type="GO" id="GO:0140662">
    <property type="term" value="F:ATP-dependent protein folding chaperone"/>
    <property type="evidence" value="ECO:0007669"/>
    <property type="project" value="InterPro"/>
</dbReference>
<dbReference type="GO" id="GO:0051082">
    <property type="term" value="F:unfolded protein binding"/>
    <property type="evidence" value="ECO:0000318"/>
    <property type="project" value="GO_Central"/>
</dbReference>
<dbReference type="GO" id="GO:0006974">
    <property type="term" value="P:DNA damage response"/>
    <property type="evidence" value="ECO:0000318"/>
    <property type="project" value="GO_Central"/>
</dbReference>
<dbReference type="GO" id="GO:0006457">
    <property type="term" value="P:protein folding"/>
    <property type="evidence" value="ECO:0000318"/>
    <property type="project" value="GO_Central"/>
</dbReference>
<dbReference type="GO" id="GO:0009408">
    <property type="term" value="P:response to heat"/>
    <property type="evidence" value="ECO:0000318"/>
    <property type="project" value="GO_Central"/>
</dbReference>
<dbReference type="CDD" id="cd16927">
    <property type="entry name" value="HATPase_Hsp90-like"/>
    <property type="match status" value="1"/>
</dbReference>
<dbReference type="FunFam" id="1.20.120.790:FF:000002">
    <property type="entry name" value="Molecular chaperone HtpG"/>
    <property type="match status" value="1"/>
</dbReference>
<dbReference type="FunFam" id="3.30.230.80:FF:000002">
    <property type="entry name" value="Molecular chaperone HtpG"/>
    <property type="match status" value="1"/>
</dbReference>
<dbReference type="FunFam" id="3.30.565.10:FF:000009">
    <property type="entry name" value="Molecular chaperone HtpG"/>
    <property type="match status" value="1"/>
</dbReference>
<dbReference type="FunFam" id="3.40.50.11260:FF:000002">
    <property type="entry name" value="Molecular chaperone HtpG"/>
    <property type="match status" value="1"/>
</dbReference>
<dbReference type="Gene3D" id="3.30.230.80">
    <property type="match status" value="1"/>
</dbReference>
<dbReference type="Gene3D" id="3.40.50.11260">
    <property type="match status" value="1"/>
</dbReference>
<dbReference type="Gene3D" id="1.20.120.790">
    <property type="entry name" value="Heat shock protein 90, C-terminal domain"/>
    <property type="match status" value="1"/>
</dbReference>
<dbReference type="Gene3D" id="3.30.565.10">
    <property type="entry name" value="Histidine kinase-like ATPase, C-terminal domain"/>
    <property type="match status" value="1"/>
</dbReference>
<dbReference type="HAMAP" id="MF_00505">
    <property type="entry name" value="HSP90"/>
    <property type="match status" value="1"/>
</dbReference>
<dbReference type="InterPro" id="IPR036890">
    <property type="entry name" value="HATPase_C_sf"/>
</dbReference>
<dbReference type="InterPro" id="IPR019805">
    <property type="entry name" value="Heat_shock_protein_90_CS"/>
</dbReference>
<dbReference type="InterPro" id="IPR037196">
    <property type="entry name" value="HSP90_C"/>
</dbReference>
<dbReference type="InterPro" id="IPR001404">
    <property type="entry name" value="Hsp90_fam"/>
</dbReference>
<dbReference type="InterPro" id="IPR020575">
    <property type="entry name" value="Hsp90_N"/>
</dbReference>
<dbReference type="InterPro" id="IPR020568">
    <property type="entry name" value="Ribosomal_Su5_D2-typ_SF"/>
</dbReference>
<dbReference type="NCBIfam" id="NF003555">
    <property type="entry name" value="PRK05218.1"/>
    <property type="match status" value="1"/>
</dbReference>
<dbReference type="PANTHER" id="PTHR11528">
    <property type="entry name" value="HEAT SHOCK PROTEIN 90 FAMILY MEMBER"/>
    <property type="match status" value="1"/>
</dbReference>
<dbReference type="Pfam" id="PF13589">
    <property type="entry name" value="HATPase_c_3"/>
    <property type="match status" value="1"/>
</dbReference>
<dbReference type="Pfam" id="PF00183">
    <property type="entry name" value="HSP90"/>
    <property type="match status" value="1"/>
</dbReference>
<dbReference type="PIRSF" id="PIRSF002583">
    <property type="entry name" value="Hsp90"/>
    <property type="match status" value="1"/>
</dbReference>
<dbReference type="PRINTS" id="PR00775">
    <property type="entry name" value="HEATSHOCK90"/>
</dbReference>
<dbReference type="SMART" id="SM00387">
    <property type="entry name" value="HATPase_c"/>
    <property type="match status" value="1"/>
</dbReference>
<dbReference type="SUPFAM" id="SSF55874">
    <property type="entry name" value="ATPase domain of HSP90 chaperone/DNA topoisomerase II/histidine kinase"/>
    <property type="match status" value="1"/>
</dbReference>
<dbReference type="SUPFAM" id="SSF110942">
    <property type="entry name" value="HSP90 C-terminal domain"/>
    <property type="match status" value="1"/>
</dbReference>
<dbReference type="SUPFAM" id="SSF54211">
    <property type="entry name" value="Ribosomal protein S5 domain 2-like"/>
    <property type="match status" value="1"/>
</dbReference>
<dbReference type="PROSITE" id="PS00298">
    <property type="entry name" value="HSP90"/>
    <property type="match status" value="1"/>
</dbReference>
<feature type="chain" id="PRO_0000063013" description="Chaperone protein HtpG">
    <location>
        <begin position="1"/>
        <end position="624"/>
    </location>
</feature>
<feature type="region of interest" description="A; substrate-binding" evidence="1">
    <location>
        <begin position="1"/>
        <end position="336"/>
    </location>
</feature>
<feature type="region of interest" description="B" evidence="1">
    <location>
        <begin position="337"/>
        <end position="552"/>
    </location>
</feature>
<feature type="region of interest" description="C" evidence="1">
    <location>
        <begin position="553"/>
        <end position="624"/>
    </location>
</feature>
<evidence type="ECO:0000255" key="1">
    <source>
        <dbReference type="HAMAP-Rule" id="MF_00505"/>
    </source>
</evidence>
<evidence type="ECO:0000269" key="2">
    <source>
    </source>
</evidence>
<evidence type="ECO:0000305" key="3"/>
<gene>
    <name evidence="1" type="primary">htpG</name>
    <name type="ordered locus">STM0487</name>
</gene>
<name>HTPG_SALTY</name>
<accession>P58480</accession>
<reference key="1">
    <citation type="journal article" date="2001" name="Nature">
        <title>Complete genome sequence of Salmonella enterica serovar Typhimurium LT2.</title>
        <authorList>
            <person name="McClelland M."/>
            <person name="Sanderson K.E."/>
            <person name="Spieth J."/>
            <person name="Clifton S.W."/>
            <person name="Latreille P."/>
            <person name="Courtney L."/>
            <person name="Porwollik S."/>
            <person name="Ali J."/>
            <person name="Dante M."/>
            <person name="Du F."/>
            <person name="Hou S."/>
            <person name="Layman D."/>
            <person name="Leonard S."/>
            <person name="Nguyen C."/>
            <person name="Scott K."/>
            <person name="Holmes A."/>
            <person name="Grewal N."/>
            <person name="Mulvaney E."/>
            <person name="Ryan E."/>
            <person name="Sun H."/>
            <person name="Florea L."/>
            <person name="Miller W."/>
            <person name="Stoneking T."/>
            <person name="Nhan M."/>
            <person name="Waterston R."/>
            <person name="Wilson R.K."/>
        </authorList>
    </citation>
    <scope>NUCLEOTIDE SEQUENCE [LARGE SCALE GENOMIC DNA]</scope>
    <source>
        <strain>LT2 / SGSC1412 / ATCC 700720</strain>
    </source>
</reference>
<reference key="2">
    <citation type="journal article" date="2020" name="Cell Rep.">
        <title>The YdiU Domain Modulates Bacterial Stress Signaling through Mn2+-Dependent UMPylation.</title>
        <authorList>
            <person name="Yang Y."/>
            <person name="Yue Y."/>
            <person name="Song N."/>
            <person name="Li C."/>
            <person name="Yuan Z."/>
            <person name="Wang Y."/>
            <person name="Ma Y."/>
            <person name="Li H."/>
            <person name="Zhang F."/>
            <person name="Wang W."/>
            <person name="Jia H."/>
            <person name="Li P."/>
            <person name="Li X."/>
            <person name="Wang Q."/>
            <person name="Ding Z."/>
            <person name="Dong H."/>
            <person name="Gu L."/>
            <person name="Li B."/>
        </authorList>
    </citation>
    <scope>ACTIVITY REGULATION</scope>
    <scope>URIDYLYLATION</scope>
    <source>
        <strain>ATCC 14028 / SGSC 2980 / CDC 6516-60 / NCTC 12023</strain>
    </source>
</reference>
<organism>
    <name type="scientific">Salmonella typhimurium (strain LT2 / SGSC1412 / ATCC 700720)</name>
    <dbReference type="NCBI Taxonomy" id="99287"/>
    <lineage>
        <taxon>Bacteria</taxon>
        <taxon>Pseudomonadati</taxon>
        <taxon>Pseudomonadota</taxon>
        <taxon>Gammaproteobacteria</taxon>
        <taxon>Enterobacterales</taxon>
        <taxon>Enterobacteriaceae</taxon>
        <taxon>Salmonella</taxon>
    </lineage>
</organism>
<protein>
    <recommendedName>
        <fullName evidence="1">Chaperone protein HtpG</fullName>
    </recommendedName>
    <alternativeName>
        <fullName evidence="1">Heat shock protein HtpG</fullName>
    </alternativeName>
    <alternativeName>
        <fullName evidence="1">High temperature protein G</fullName>
    </alternativeName>
</protein>
<proteinExistence type="inferred from homology"/>